<protein>
    <recommendedName>
        <fullName evidence="1">Porphobilinogen deaminase</fullName>
        <shortName evidence="1">PBG</shortName>
        <ecNumber evidence="1">2.5.1.61</ecNumber>
    </recommendedName>
    <alternativeName>
        <fullName evidence="1">Hydroxymethylbilane synthase</fullName>
        <shortName evidence="1">HMBS</shortName>
    </alternativeName>
    <alternativeName>
        <fullName evidence="1">Pre-uroporphyrinogen synthase</fullName>
    </alternativeName>
</protein>
<dbReference type="EC" id="2.5.1.61" evidence="1"/>
<dbReference type="EMBL" id="AM295250">
    <property type="protein sequence ID" value="CAL28182.1"/>
    <property type="molecule type" value="Genomic_DNA"/>
</dbReference>
<dbReference type="RefSeq" id="WP_015900522.1">
    <property type="nucleotide sequence ID" value="NC_012121.1"/>
</dbReference>
<dbReference type="SMR" id="B9DNE1"/>
<dbReference type="GeneID" id="93793700"/>
<dbReference type="KEGG" id="sca:SCA_1276"/>
<dbReference type="eggNOG" id="COG0181">
    <property type="taxonomic scope" value="Bacteria"/>
</dbReference>
<dbReference type="HOGENOM" id="CLU_019704_0_2_9"/>
<dbReference type="OrthoDB" id="9810298at2"/>
<dbReference type="BioCyc" id="SCAR396513:SCA_RS06365-MONOMER"/>
<dbReference type="UniPathway" id="UPA00251">
    <property type="reaction ID" value="UER00319"/>
</dbReference>
<dbReference type="Proteomes" id="UP000000444">
    <property type="component" value="Chromosome"/>
</dbReference>
<dbReference type="GO" id="GO:0005737">
    <property type="term" value="C:cytoplasm"/>
    <property type="evidence" value="ECO:0007669"/>
    <property type="project" value="TreeGrafter"/>
</dbReference>
<dbReference type="GO" id="GO:0004418">
    <property type="term" value="F:hydroxymethylbilane synthase activity"/>
    <property type="evidence" value="ECO:0007669"/>
    <property type="project" value="UniProtKB-UniRule"/>
</dbReference>
<dbReference type="GO" id="GO:0006782">
    <property type="term" value="P:protoporphyrinogen IX biosynthetic process"/>
    <property type="evidence" value="ECO:0007669"/>
    <property type="project" value="UniProtKB-UniRule"/>
</dbReference>
<dbReference type="CDD" id="cd13646">
    <property type="entry name" value="PBP2_EcHMBS_like"/>
    <property type="match status" value="1"/>
</dbReference>
<dbReference type="FunFam" id="3.30.160.40:FF:000001">
    <property type="entry name" value="Porphobilinogen deaminase"/>
    <property type="match status" value="1"/>
</dbReference>
<dbReference type="FunFam" id="3.40.190.10:FF:000004">
    <property type="entry name" value="Porphobilinogen deaminase"/>
    <property type="match status" value="1"/>
</dbReference>
<dbReference type="FunFam" id="3.40.190.10:FF:000005">
    <property type="entry name" value="Porphobilinogen deaminase"/>
    <property type="match status" value="1"/>
</dbReference>
<dbReference type="Gene3D" id="3.40.190.10">
    <property type="entry name" value="Periplasmic binding protein-like II"/>
    <property type="match status" value="2"/>
</dbReference>
<dbReference type="Gene3D" id="3.30.160.40">
    <property type="entry name" value="Porphobilinogen deaminase, C-terminal domain"/>
    <property type="match status" value="1"/>
</dbReference>
<dbReference type="HAMAP" id="MF_00260">
    <property type="entry name" value="Porphobil_deam"/>
    <property type="match status" value="1"/>
</dbReference>
<dbReference type="InterPro" id="IPR000860">
    <property type="entry name" value="HemC"/>
</dbReference>
<dbReference type="InterPro" id="IPR022419">
    <property type="entry name" value="Porphobilin_deaminase_cofac_BS"/>
</dbReference>
<dbReference type="InterPro" id="IPR022417">
    <property type="entry name" value="Porphobilin_deaminase_N"/>
</dbReference>
<dbReference type="InterPro" id="IPR022418">
    <property type="entry name" value="Porphobilinogen_deaminase_C"/>
</dbReference>
<dbReference type="InterPro" id="IPR036803">
    <property type="entry name" value="Porphobilinogen_deaminase_C_sf"/>
</dbReference>
<dbReference type="NCBIfam" id="TIGR00212">
    <property type="entry name" value="hemC"/>
    <property type="match status" value="1"/>
</dbReference>
<dbReference type="PANTHER" id="PTHR11557">
    <property type="entry name" value="PORPHOBILINOGEN DEAMINASE"/>
    <property type="match status" value="1"/>
</dbReference>
<dbReference type="PANTHER" id="PTHR11557:SF0">
    <property type="entry name" value="PORPHOBILINOGEN DEAMINASE"/>
    <property type="match status" value="1"/>
</dbReference>
<dbReference type="Pfam" id="PF01379">
    <property type="entry name" value="Porphobil_deam"/>
    <property type="match status" value="1"/>
</dbReference>
<dbReference type="Pfam" id="PF03900">
    <property type="entry name" value="Porphobil_deamC"/>
    <property type="match status" value="1"/>
</dbReference>
<dbReference type="PIRSF" id="PIRSF001438">
    <property type="entry name" value="4pyrrol_synth_OHMeBilane_synth"/>
    <property type="match status" value="1"/>
</dbReference>
<dbReference type="PRINTS" id="PR00151">
    <property type="entry name" value="PORPHBDMNASE"/>
</dbReference>
<dbReference type="SUPFAM" id="SSF53850">
    <property type="entry name" value="Periplasmic binding protein-like II"/>
    <property type="match status" value="1"/>
</dbReference>
<dbReference type="SUPFAM" id="SSF54782">
    <property type="entry name" value="Porphobilinogen deaminase (hydroxymethylbilane synthase), C-terminal domain"/>
    <property type="match status" value="1"/>
</dbReference>
<dbReference type="PROSITE" id="PS00533">
    <property type="entry name" value="PORPHOBILINOGEN_DEAM"/>
    <property type="match status" value="1"/>
</dbReference>
<organism>
    <name type="scientific">Staphylococcus carnosus (strain TM300)</name>
    <dbReference type="NCBI Taxonomy" id="396513"/>
    <lineage>
        <taxon>Bacteria</taxon>
        <taxon>Bacillati</taxon>
        <taxon>Bacillota</taxon>
        <taxon>Bacilli</taxon>
        <taxon>Bacillales</taxon>
        <taxon>Staphylococcaceae</taxon>
        <taxon>Staphylococcus</taxon>
    </lineage>
</organism>
<gene>
    <name evidence="1" type="primary">hemC</name>
    <name type="ordered locus">Sca_1276</name>
</gene>
<comment type="function">
    <text evidence="1">Tetrapolymerization of the monopyrrole PBG into the hydroxymethylbilane pre-uroporphyrinogen in several discrete steps.</text>
</comment>
<comment type="catalytic activity">
    <reaction evidence="1">
        <text>4 porphobilinogen + H2O = hydroxymethylbilane + 4 NH4(+)</text>
        <dbReference type="Rhea" id="RHEA:13185"/>
        <dbReference type="ChEBI" id="CHEBI:15377"/>
        <dbReference type="ChEBI" id="CHEBI:28938"/>
        <dbReference type="ChEBI" id="CHEBI:57845"/>
        <dbReference type="ChEBI" id="CHEBI:58126"/>
        <dbReference type="EC" id="2.5.1.61"/>
    </reaction>
</comment>
<comment type="cofactor">
    <cofactor evidence="1">
        <name>dipyrromethane</name>
        <dbReference type="ChEBI" id="CHEBI:60342"/>
    </cofactor>
    <text evidence="1">Binds 1 dipyrromethane group covalently.</text>
</comment>
<comment type="pathway">
    <text evidence="1">Porphyrin-containing compound metabolism; protoporphyrin-IX biosynthesis; coproporphyrinogen-III from 5-aminolevulinate: step 2/4.</text>
</comment>
<comment type="subunit">
    <text evidence="1">Monomer.</text>
</comment>
<comment type="miscellaneous">
    <text evidence="1">The porphobilinogen subunits are added to the dipyrromethane group.</text>
</comment>
<comment type="similarity">
    <text evidence="1">Belongs to the HMBS family.</text>
</comment>
<reference key="1">
    <citation type="journal article" date="2009" name="Appl. Environ. Microbiol.">
        <title>Genome analysis of the meat starter culture bacterium Staphylococcus carnosus TM300.</title>
        <authorList>
            <person name="Rosenstein R."/>
            <person name="Nerz C."/>
            <person name="Biswas L."/>
            <person name="Resch A."/>
            <person name="Raddatz G."/>
            <person name="Schuster S.C."/>
            <person name="Goetz F."/>
        </authorList>
    </citation>
    <scope>NUCLEOTIDE SEQUENCE [LARGE SCALE GENOMIC DNA]</scope>
    <source>
        <strain>TM300</strain>
    </source>
</reference>
<evidence type="ECO:0000255" key="1">
    <source>
        <dbReference type="HAMAP-Rule" id="MF_00260"/>
    </source>
</evidence>
<accession>B9DNE1</accession>
<name>HEM3_STACT</name>
<proteinExistence type="inferred from homology"/>
<keyword id="KW-0627">Porphyrin biosynthesis</keyword>
<keyword id="KW-1185">Reference proteome</keyword>
<keyword id="KW-0808">Transferase</keyword>
<sequence>MRKLVVGSRRSKLALTQSRQFIERLKKVEPDLDIEIKEIVTKGDRIVDKQLSKVGGKGLFVKEIQQELFDHEIDMAIHSLKDVPSELPDGLTLGCIPDREIPLDAFISKNHVQLADLPDGSIVGTSSLRRGAQILAKYPNLEIKWIRGNIDTRLSKLETEDYDAIILAAAGLRRMGWSDDIVTEYLDPELLVPAIGQGALGIECRSDDTELLDLLSKVHNQEVAECVTAERTFLKEMNGSCQVPIGGYATIDDNGRLTFTGLIMSPDGKQRFEQTATGNDPVELGKEVSDILKEQGAKEIIDALNEES</sequence>
<feature type="chain" id="PRO_1000190290" description="Porphobilinogen deaminase">
    <location>
        <begin position="1"/>
        <end position="308"/>
    </location>
</feature>
<feature type="modified residue" description="S-(dipyrrolylmethanemethyl)cysteine" evidence="1">
    <location>
        <position position="241"/>
    </location>
</feature>